<organism>
    <name type="scientific">Caenorhabditis elegans</name>
    <dbReference type="NCBI Taxonomy" id="6239"/>
    <lineage>
        <taxon>Eukaryota</taxon>
        <taxon>Metazoa</taxon>
        <taxon>Ecdysozoa</taxon>
        <taxon>Nematoda</taxon>
        <taxon>Chromadorea</taxon>
        <taxon>Rhabditida</taxon>
        <taxon>Rhabditina</taxon>
        <taxon>Rhabditomorpha</taxon>
        <taxon>Rhabditoidea</taxon>
        <taxon>Rhabditidae</taxon>
        <taxon>Peloderinae</taxon>
        <taxon>Caenorhabditis</taxon>
    </lineage>
</organism>
<reference key="1">
    <citation type="journal article" date="1998" name="Science">
        <title>Genome sequence of the nematode C. elegans: a platform for investigating biology.</title>
        <authorList>
            <consortium name="The C. elegans sequencing consortium"/>
        </authorList>
    </citation>
    <scope>NUCLEOTIDE SEQUENCE [LARGE SCALE GENOMIC DNA]</scope>
    <source>
        <strain>Bristol N2</strain>
    </source>
</reference>
<keyword id="KW-1185">Reference proteome</keyword>
<gene>
    <name type="ORF">F47D12.3</name>
</gene>
<proteinExistence type="predicted"/>
<sequence length="140" mass="16301">MVNELSFNCEDAWLNLFVGGEMYPVQVKTLMNPTTCGSYFRDVVKVSDAAIKVRGVQWDTAPNHIKFRVDIDRDGVLFRHVLQYLRNGKLTSLPDDIFTLESLVAEAEFFGLEKYREMLKKKLWKLTGKRQYYACYEDSD</sequence>
<accession>Q09389</accession>
<name>YR43_CAEEL</name>
<protein>
    <recommendedName>
        <fullName>Uncharacterized protein F47D12.3</fullName>
    </recommendedName>
</protein>
<dbReference type="EMBL" id="FO080618">
    <property type="protein sequence ID" value="CCD83368.1"/>
    <property type="molecule type" value="Genomic_DNA"/>
</dbReference>
<dbReference type="PIR" id="A88479">
    <property type="entry name" value="A88479"/>
</dbReference>
<dbReference type="RefSeq" id="NP_498381.1">
    <property type="nucleotide sequence ID" value="NM_065980.3"/>
</dbReference>
<dbReference type="SMR" id="Q09389"/>
<dbReference type="BioGRID" id="50687">
    <property type="interactions" value="3"/>
</dbReference>
<dbReference type="IntAct" id="Q09389">
    <property type="interactions" value="2"/>
</dbReference>
<dbReference type="STRING" id="6239.F47D12.3.1"/>
<dbReference type="PaxDb" id="6239-F47D12.3"/>
<dbReference type="PeptideAtlas" id="Q09389"/>
<dbReference type="EnsemblMetazoa" id="F47D12.3.1">
    <property type="protein sequence ID" value="F47D12.3.1"/>
    <property type="gene ID" value="WBGene00018560"/>
</dbReference>
<dbReference type="GeneID" id="185932"/>
<dbReference type="KEGG" id="cel:CELE_F47D12.3"/>
<dbReference type="UCSC" id="F47D12.3">
    <property type="organism name" value="c. elegans"/>
</dbReference>
<dbReference type="AGR" id="WB:WBGene00018560"/>
<dbReference type="CTD" id="185932"/>
<dbReference type="WormBase" id="F47D12.3">
    <property type="protein sequence ID" value="CE01947"/>
    <property type="gene ID" value="WBGene00018560"/>
</dbReference>
<dbReference type="eggNOG" id="KOG2723">
    <property type="taxonomic scope" value="Eukaryota"/>
</dbReference>
<dbReference type="HOGENOM" id="CLU_128548_0_0_1"/>
<dbReference type="InParanoid" id="Q09389"/>
<dbReference type="OMA" id="NCEDAWL"/>
<dbReference type="OrthoDB" id="2414723at2759"/>
<dbReference type="PhylomeDB" id="Q09389"/>
<dbReference type="PRO" id="PR:Q09389"/>
<dbReference type="Proteomes" id="UP000001940">
    <property type="component" value="Chromosome III"/>
</dbReference>
<dbReference type="Bgee" id="WBGene00018560">
    <property type="expression patterns" value="Expressed in larva and 3 other cell types or tissues"/>
</dbReference>
<dbReference type="GO" id="GO:0051260">
    <property type="term" value="P:protein homooligomerization"/>
    <property type="evidence" value="ECO:0007669"/>
    <property type="project" value="InterPro"/>
</dbReference>
<dbReference type="CDD" id="cd18316">
    <property type="entry name" value="BTB_POZ_KCTD-like"/>
    <property type="match status" value="1"/>
</dbReference>
<dbReference type="Gene3D" id="3.30.710.10">
    <property type="entry name" value="Potassium Channel Kv1.1, Chain A"/>
    <property type="match status" value="1"/>
</dbReference>
<dbReference type="InterPro" id="IPR011333">
    <property type="entry name" value="SKP1/BTB/POZ_sf"/>
</dbReference>
<dbReference type="InterPro" id="IPR003131">
    <property type="entry name" value="T1-type_BTB"/>
</dbReference>
<dbReference type="PANTHER" id="PTHR14499:SF136">
    <property type="entry name" value="GH08630P"/>
    <property type="match status" value="1"/>
</dbReference>
<dbReference type="PANTHER" id="PTHR14499">
    <property type="entry name" value="POTASSIUM CHANNEL TETRAMERIZATION DOMAIN-CONTAINING"/>
    <property type="match status" value="1"/>
</dbReference>
<dbReference type="Pfam" id="PF02214">
    <property type="entry name" value="BTB_2"/>
    <property type="match status" value="1"/>
</dbReference>
<dbReference type="SUPFAM" id="SSF54695">
    <property type="entry name" value="POZ domain"/>
    <property type="match status" value="1"/>
</dbReference>
<feature type="chain" id="PRO_0000065351" description="Uncharacterized protein F47D12.3">
    <location>
        <begin position="1"/>
        <end position="140"/>
    </location>
</feature>